<keyword id="KW-0020">Allergen</keyword>
<keyword id="KW-0134">Cell wall</keyword>
<keyword id="KW-1015">Disulfide bond</keyword>
<keyword id="KW-0964">Secreted</keyword>
<keyword id="KW-0732">Signal</keyword>
<accession>Q8NIN9</accession>
<name>HYP1_DAVTA</name>
<proteinExistence type="evidence at protein level"/>
<organism>
    <name type="scientific">Davidiella tassiana</name>
    <name type="common">Mycosphaerella tassiana</name>
    <name type="synonym">Cladosporium herbarum</name>
    <dbReference type="NCBI Taxonomy" id="29918"/>
    <lineage>
        <taxon>Eukaryota</taxon>
        <taxon>Fungi</taxon>
        <taxon>Dikarya</taxon>
        <taxon>Ascomycota</taxon>
        <taxon>Pezizomycotina</taxon>
        <taxon>Dothideomycetes</taxon>
        <taxon>Dothideomycetidae</taxon>
        <taxon>Cladosporiales</taxon>
        <taxon>Cladosporiaceae</taxon>
        <taxon>Cladosporium</taxon>
    </lineage>
</organism>
<gene>
    <name evidence="4" type="primary">HCh-1</name>
</gene>
<comment type="function">
    <text evidence="5">Aerial growth, conidiation, and dispersal of filamentous fungi in the environment rely upon a capability of their secreting small amphipathic proteins called hydrophobins (HPBs) with low sequence identity. Class I can self-assemble into an outermost layer of rodlet bundles on aerial cell surfaces, conferring cellular hydrophobicity that supports fungal growth, development and dispersal; whereas Class II form highly ordered films at water-air interfaces through intermolecular interactions but contribute nothing to the rodlet structure.</text>
</comment>
<comment type="subunit">
    <text evidence="1">Self-assembles to form functional amyloid fibrils called rodlets. Self-assembly into fibrillar rodlets occurs spontaneously at hydrophobic:hydrophilic interfaces and the rodlets further associate laterally to form amphipathic monolayers.</text>
</comment>
<comment type="subcellular location">
    <subcellularLocation>
        <location evidence="3">Secreted</location>
    </subcellularLocation>
    <subcellularLocation>
        <location evidence="3">Secreted</location>
        <location evidence="3">Cell wall</location>
    </subcellularLocation>
</comment>
<comment type="allergen">
    <text evidence="3">Causes an allergic reaction in human. Binds to IgE.</text>
</comment>
<comment type="similarity">
    <text evidence="5">Belongs to the fungal hydrophobin family.</text>
</comment>
<evidence type="ECO:0000250" key="1">
    <source>
        <dbReference type="UniProtKB" id="Q04571"/>
    </source>
</evidence>
<evidence type="ECO:0000255" key="2"/>
<evidence type="ECO:0000269" key="3">
    <source>
    </source>
</evidence>
<evidence type="ECO:0000303" key="4">
    <source>
    </source>
</evidence>
<evidence type="ECO:0000305" key="5"/>
<protein>
    <recommendedName>
        <fullName evidence="4">Class I hydrophobin 1</fullName>
    </recommendedName>
    <allergenName>Cla h ?</allergenName>
</protein>
<sequence length="105" mass="10532">MAFIKSLLIASVAAVAFAAPQGGASDNNKKVEIDGQDSAPVCGNGQKVACCNSGEDLIGLNCLSIPILAIPIQKACGSNIAACCQTGDSEGNLLNLEANCLAIPL</sequence>
<reference key="1">
    <citation type="journal article" date="2003" name="Clin. Exp. Allergy">
        <title>IgE-binding and skin test reactivity to hydrophobin HCh-1 from Cladosporium herbarum, the first allergenic cell wall component of fungi.</title>
        <authorList>
            <person name="Weichel M."/>
            <person name="Schmid-Grendelmeier P."/>
            <person name="Rhyner C."/>
            <person name="Achatz G."/>
            <person name="Blaser K."/>
            <person name="Crameri R."/>
        </authorList>
    </citation>
    <scope>NUCLEOTIDE SEQUENCE [MRNA]</scope>
    <scope>SUBCELLULAR LOCATION</scope>
    <scope>ALLERGEN</scope>
    <source>
        <strain>280202-Berlin</strain>
    </source>
</reference>
<feature type="signal peptide" evidence="2">
    <location>
        <begin position="1"/>
        <end position="18"/>
    </location>
</feature>
<feature type="chain" id="PRO_5000068672" description="Class I hydrophobin 1">
    <location>
        <begin position="19"/>
        <end position="105"/>
    </location>
</feature>
<feature type="disulfide bond" evidence="1">
    <location>
        <begin position="42"/>
        <end position="83"/>
    </location>
</feature>
<feature type="disulfide bond" evidence="1">
    <location>
        <begin position="50"/>
        <end position="76"/>
    </location>
</feature>
<feature type="disulfide bond" evidence="1">
    <location>
        <begin position="51"/>
        <end position="62"/>
    </location>
</feature>
<feature type="disulfide bond" evidence="1">
    <location>
        <begin position="84"/>
        <end position="100"/>
    </location>
</feature>
<dbReference type="EMBL" id="AJ496190">
    <property type="protein sequence ID" value="CAD42710.1"/>
    <property type="molecule type" value="mRNA"/>
</dbReference>
<dbReference type="Allergome" id="834">
    <property type="allergen name" value="Cla h HCh1"/>
</dbReference>
<dbReference type="GO" id="GO:0005576">
    <property type="term" value="C:extracellular region"/>
    <property type="evidence" value="ECO:0007669"/>
    <property type="project" value="UniProtKB-KW"/>
</dbReference>